<protein>
    <recommendedName>
        <fullName evidence="1">L-ectoine synthase</fullName>
        <ecNumber evidence="1">4.2.1.108</ecNumber>
    </recommendedName>
    <alternativeName>
        <fullName evidence="1">N-acetyldiaminobutyrate dehydratase</fullName>
    </alternativeName>
</protein>
<organism>
    <name type="scientific">Virgibacillus pantothenticus</name>
    <dbReference type="NCBI Taxonomy" id="1473"/>
    <lineage>
        <taxon>Bacteria</taxon>
        <taxon>Bacillati</taxon>
        <taxon>Bacillota</taxon>
        <taxon>Bacilli</taxon>
        <taxon>Bacillales</taxon>
        <taxon>Bacillaceae</taxon>
        <taxon>Virgibacillus</taxon>
    </lineage>
</organism>
<proteinExistence type="inferred from homology"/>
<reference key="1">
    <citation type="submission" date="2004-03" db="EMBL/GenBank/DDBJ databases">
        <title>Synthesis of compatible solute ectoine in Virgibacillus pantothenticus is induced by high osmolality and growth in the cold.</title>
        <authorList>
            <person name="Kuhlmann A.U."/>
            <person name="Gimpel S."/>
            <person name="Hoffmann T."/>
            <person name="Bremer E."/>
        </authorList>
    </citation>
    <scope>NUCLEOTIDE SEQUENCE [GENOMIC DNA]</scope>
</reference>
<dbReference type="EC" id="4.2.1.108" evidence="1"/>
<dbReference type="EMBL" id="AY585263">
    <property type="protein sequence ID" value="AAS93808.1"/>
    <property type="molecule type" value="Genomic_DNA"/>
</dbReference>
<dbReference type="RefSeq" id="WP_050352490.1">
    <property type="nucleotide sequence ID" value="NZ_BOSN01000001.1"/>
</dbReference>
<dbReference type="SMR" id="Q6PR31"/>
<dbReference type="GeneID" id="66870974"/>
<dbReference type="OrthoDB" id="4406415at2"/>
<dbReference type="UniPathway" id="UPA00067">
    <property type="reaction ID" value="UER00123"/>
</dbReference>
<dbReference type="GO" id="GO:0033990">
    <property type="term" value="F:ectoine synthase activity"/>
    <property type="evidence" value="ECO:0007669"/>
    <property type="project" value="UniProtKB-EC"/>
</dbReference>
<dbReference type="GO" id="GO:0019491">
    <property type="term" value="P:ectoine biosynthetic process"/>
    <property type="evidence" value="ECO:0007669"/>
    <property type="project" value="UniProtKB-UniRule"/>
</dbReference>
<dbReference type="CDD" id="cd06978">
    <property type="entry name" value="cupin_EctC"/>
    <property type="match status" value="1"/>
</dbReference>
<dbReference type="Gene3D" id="2.60.120.10">
    <property type="entry name" value="Jelly Rolls"/>
    <property type="match status" value="1"/>
</dbReference>
<dbReference type="HAMAP" id="MF_01255">
    <property type="entry name" value="Ectoine_synth"/>
    <property type="match status" value="1"/>
</dbReference>
<dbReference type="InterPro" id="IPR010462">
    <property type="entry name" value="Ectoine_synth"/>
</dbReference>
<dbReference type="InterPro" id="IPR014710">
    <property type="entry name" value="RmlC-like_jellyroll"/>
</dbReference>
<dbReference type="InterPro" id="IPR011051">
    <property type="entry name" value="RmlC_Cupin_sf"/>
</dbReference>
<dbReference type="NCBIfam" id="NF009806">
    <property type="entry name" value="PRK13290.1"/>
    <property type="match status" value="1"/>
</dbReference>
<dbReference type="PANTHER" id="PTHR39289">
    <property type="match status" value="1"/>
</dbReference>
<dbReference type="PANTHER" id="PTHR39289:SF1">
    <property type="entry name" value="L-ECTOINE SYNTHASE"/>
    <property type="match status" value="1"/>
</dbReference>
<dbReference type="Pfam" id="PF06339">
    <property type="entry name" value="Ectoine_synth"/>
    <property type="match status" value="1"/>
</dbReference>
<dbReference type="SUPFAM" id="SSF51182">
    <property type="entry name" value="RmlC-like cupins"/>
    <property type="match status" value="1"/>
</dbReference>
<keyword id="KW-0456">Lyase</keyword>
<comment type="function">
    <text evidence="1">Catalyzes the circularization of gamma-N-acetyl-alpha,gamma-diaminobutyric acid (ADABA) to ectoine (1,4,5,6-tetrahydro-2-methyl-4-pyrimidine carboxylic acid), which is an excellent osmoprotectant.</text>
</comment>
<comment type="catalytic activity">
    <reaction evidence="1">
        <text>(2S)-4-acetamido-2-aminobutanoate = L-ectoine + H2O</text>
        <dbReference type="Rhea" id="RHEA:17281"/>
        <dbReference type="ChEBI" id="CHEBI:15377"/>
        <dbReference type="ChEBI" id="CHEBI:58515"/>
        <dbReference type="ChEBI" id="CHEBI:58929"/>
        <dbReference type="EC" id="4.2.1.108"/>
    </reaction>
</comment>
<comment type="pathway">
    <text evidence="1">Amine and polyamine biosynthesis; ectoine biosynthesis; L-ectoine from L-aspartate 4-semialdehyde: step 3/3.</text>
</comment>
<comment type="similarity">
    <text evidence="1">Belongs to the ectoine synthase family.</text>
</comment>
<evidence type="ECO:0000255" key="1">
    <source>
        <dbReference type="HAMAP-Rule" id="MF_01255"/>
    </source>
</evidence>
<sequence>MIVKSLDDIIGTDDETSSDNWTSRRFIMKKDNVGFSLNDTLIKAGTTNFFWYKNHIEAVYCIEGEGEIEKLETGEIYKLKAGTMYLLNEHDKHELRAKTQMRMVCVFNPPLVGTETHTEEGYYPLLTE</sequence>
<gene>
    <name evidence="1" type="primary">ectC</name>
</gene>
<accession>Q6PR31</accession>
<feature type="chain" id="PRO_0000220161" description="L-ectoine synthase">
    <location>
        <begin position="1"/>
        <end position="128"/>
    </location>
</feature>
<name>ECTC_VIRPA</name>